<name>VKTTI_NAJNA</name>
<evidence type="ECO:0000250" key="1"/>
<evidence type="ECO:0000255" key="2">
    <source>
        <dbReference type="PROSITE-ProRule" id="PRU00031"/>
    </source>
</evidence>
<evidence type="ECO:0000269" key="3">
    <source>
    </source>
</evidence>
<evidence type="ECO:0000305" key="4"/>
<comment type="function">
    <text evidence="3">Serine protease inhibitor that inhibits trypsin (Ki=0.0035 nM).</text>
</comment>
<comment type="subcellular location">
    <subcellularLocation>
        <location>Secreted</location>
    </subcellularLocation>
</comment>
<comment type="tissue specificity">
    <text>Expressed by the venom gland.</text>
</comment>
<comment type="similarity">
    <text evidence="4">Belongs to the venom Kunitz-type family.</text>
</comment>
<keyword id="KW-0903">Direct protein sequencing</keyword>
<keyword id="KW-1015">Disulfide bond</keyword>
<keyword id="KW-0646">Protease inhibitor</keyword>
<keyword id="KW-1185">Reference proteome</keyword>
<keyword id="KW-0964">Secreted</keyword>
<keyword id="KW-0722">Serine protease inhibitor</keyword>
<protein>
    <recommendedName>
        <fullName>Kunitz-type serine protease inhibitor</fullName>
    </recommendedName>
    <alternativeName>
        <fullName>Venom trypsin inhibitor</fullName>
    </alternativeName>
</protein>
<reference key="1">
    <citation type="journal article" date="1990" name="Eur. J. Biochem.">
        <title>Primary structure and functional properties of cobra (Naja naja naja) venom Kunitz-type trypsin inhibitor.</title>
        <authorList>
            <person name="Shafqat J."/>
            <person name="Beg O.U."/>
            <person name="Yin S.-J."/>
            <person name="Zaidi Z.H."/>
            <person name="Joernvall H."/>
        </authorList>
    </citation>
    <scope>PROTEIN SEQUENCE</scope>
    <scope>FUNCTION</scope>
    <source>
        <tissue>Venom</tissue>
    </source>
</reference>
<dbReference type="PIR" id="S13846">
    <property type="entry name" value="S13846"/>
</dbReference>
<dbReference type="SMR" id="P20229"/>
<dbReference type="MEROPS" id="I02.055"/>
<dbReference type="Proteomes" id="UP000694559">
    <property type="component" value="Unplaced"/>
</dbReference>
<dbReference type="GO" id="GO:0005615">
    <property type="term" value="C:extracellular space"/>
    <property type="evidence" value="ECO:0007669"/>
    <property type="project" value="TreeGrafter"/>
</dbReference>
<dbReference type="GO" id="GO:0004867">
    <property type="term" value="F:serine-type endopeptidase inhibitor activity"/>
    <property type="evidence" value="ECO:0007669"/>
    <property type="project" value="UniProtKB-KW"/>
</dbReference>
<dbReference type="CDD" id="cd22594">
    <property type="entry name" value="Kunitz_textilinin-like"/>
    <property type="match status" value="1"/>
</dbReference>
<dbReference type="FunFam" id="4.10.410.10:FF:000021">
    <property type="entry name" value="Serine protease inhibitor, putative"/>
    <property type="match status" value="1"/>
</dbReference>
<dbReference type="Gene3D" id="4.10.410.10">
    <property type="entry name" value="Pancreatic trypsin inhibitor Kunitz domain"/>
    <property type="match status" value="1"/>
</dbReference>
<dbReference type="InterPro" id="IPR002223">
    <property type="entry name" value="Kunitz_BPTI"/>
</dbReference>
<dbReference type="InterPro" id="IPR036880">
    <property type="entry name" value="Kunitz_BPTI_sf"/>
</dbReference>
<dbReference type="InterPro" id="IPR020901">
    <property type="entry name" value="Prtase_inh_Kunz-CS"/>
</dbReference>
<dbReference type="InterPro" id="IPR050098">
    <property type="entry name" value="TFPI/VKTCI-like"/>
</dbReference>
<dbReference type="PANTHER" id="PTHR10083:SF374">
    <property type="entry name" value="BPTI_KUNITZ INHIBITOR DOMAIN-CONTAINING PROTEIN"/>
    <property type="match status" value="1"/>
</dbReference>
<dbReference type="PANTHER" id="PTHR10083">
    <property type="entry name" value="KUNITZ-TYPE PROTEASE INHIBITOR-RELATED"/>
    <property type="match status" value="1"/>
</dbReference>
<dbReference type="Pfam" id="PF00014">
    <property type="entry name" value="Kunitz_BPTI"/>
    <property type="match status" value="1"/>
</dbReference>
<dbReference type="PRINTS" id="PR00759">
    <property type="entry name" value="BASICPTASE"/>
</dbReference>
<dbReference type="SMART" id="SM00131">
    <property type="entry name" value="KU"/>
    <property type="match status" value="1"/>
</dbReference>
<dbReference type="SUPFAM" id="SSF57362">
    <property type="entry name" value="BPTI-like"/>
    <property type="match status" value="1"/>
</dbReference>
<dbReference type="PROSITE" id="PS00280">
    <property type="entry name" value="BPTI_KUNITZ_1"/>
    <property type="match status" value="1"/>
</dbReference>
<dbReference type="PROSITE" id="PS50279">
    <property type="entry name" value="BPTI_KUNITZ_2"/>
    <property type="match status" value="1"/>
</dbReference>
<proteinExistence type="evidence at protein level"/>
<sequence length="57" mass="6371">RPGFCELPAAKGLCKAHKPAFYYNKDSHRCQKFIYGGCGGNANRFRTIDECNRTCVG</sequence>
<feature type="chain" id="PRO_0000155439" description="Kunitz-type serine protease inhibitor">
    <location>
        <begin position="1"/>
        <end position="57"/>
    </location>
</feature>
<feature type="domain" description="BPTI/Kunitz inhibitor" evidence="2">
    <location>
        <begin position="5"/>
        <end position="55"/>
    </location>
</feature>
<feature type="site" description="Reactive bond for trypsin" evidence="1">
    <location>
        <begin position="15"/>
        <end position="16"/>
    </location>
</feature>
<feature type="disulfide bond" evidence="2">
    <location>
        <begin position="5"/>
        <end position="55"/>
    </location>
</feature>
<feature type="disulfide bond" evidence="2">
    <location>
        <begin position="14"/>
        <end position="38"/>
    </location>
</feature>
<feature type="disulfide bond" evidence="2">
    <location>
        <begin position="30"/>
        <end position="51"/>
    </location>
</feature>
<accession>P20229</accession>
<organism>
    <name type="scientific">Naja naja</name>
    <name type="common">Indian cobra</name>
    <dbReference type="NCBI Taxonomy" id="35670"/>
    <lineage>
        <taxon>Eukaryota</taxon>
        <taxon>Metazoa</taxon>
        <taxon>Chordata</taxon>
        <taxon>Craniata</taxon>
        <taxon>Vertebrata</taxon>
        <taxon>Euteleostomi</taxon>
        <taxon>Lepidosauria</taxon>
        <taxon>Squamata</taxon>
        <taxon>Bifurcata</taxon>
        <taxon>Unidentata</taxon>
        <taxon>Episquamata</taxon>
        <taxon>Toxicofera</taxon>
        <taxon>Serpentes</taxon>
        <taxon>Colubroidea</taxon>
        <taxon>Elapidae</taxon>
        <taxon>Elapinae</taxon>
        <taxon>Naja</taxon>
    </lineage>
</organism>